<comment type="function">
    <text evidence="8">Methionine-sulfoxide reductase that specifically reduces methionine (R)-sulfoxide back to methionine. While in many cases methionine oxidation is the result of random oxidation following oxidative stress, methionine oxidation is also a post-translational modification that takes place on specific residues. Acts as a regulator of actin assembly by reducing methionine (R)-sulfoxide mediated by Mical on actin thereby promoting filament repolymerization.</text>
</comment>
<comment type="catalytic activity">
    <reaction evidence="5 8">
        <text>L-methionyl-[protein] + [thioredoxin]-disulfide + H2O = L-methionyl-(R)-S-oxide-[protein] + [thioredoxin]-dithiol</text>
        <dbReference type="Rhea" id="RHEA:24164"/>
        <dbReference type="Rhea" id="RHEA-COMP:10698"/>
        <dbReference type="Rhea" id="RHEA-COMP:10700"/>
        <dbReference type="Rhea" id="RHEA-COMP:12313"/>
        <dbReference type="Rhea" id="RHEA-COMP:12314"/>
        <dbReference type="ChEBI" id="CHEBI:15377"/>
        <dbReference type="ChEBI" id="CHEBI:16044"/>
        <dbReference type="ChEBI" id="CHEBI:29950"/>
        <dbReference type="ChEBI" id="CHEBI:45764"/>
        <dbReference type="ChEBI" id="CHEBI:50058"/>
        <dbReference type="EC" id="1.8.4.12"/>
    </reaction>
</comment>
<comment type="cofactor">
    <cofactor evidence="5">
        <name>Zn(2+)</name>
        <dbReference type="ChEBI" id="CHEBI:29105"/>
    </cofactor>
    <text evidence="5">Binds 1 zinc ion per subunit.</text>
</comment>
<comment type="subcellular location">
    <subcellularLocation>
        <location evidence="1">Cytoplasm</location>
    </subcellularLocation>
    <subcellularLocation>
        <location evidence="1">Nucleus</location>
    </subcellularLocation>
    <subcellularLocation>
        <location evidence="1">Cytoplasm</location>
        <location evidence="1">Cytoskeleton</location>
    </subcellularLocation>
</comment>
<comment type="alternative products">
    <event type="alternative splicing"/>
    <isoform>
        <id>Q8INK9-1</id>
        <name evidence="11">E</name>
        <sequence type="displayed"/>
    </isoform>
    <isoform>
        <id>Q8INK9-2</id>
        <name evidence="5">A</name>
        <name>I</name>
        <sequence type="described" ref="VSP_008300 VSP_008301"/>
    </isoform>
    <isoform>
        <id>Q8INK9-3</id>
        <name evidence="11">B</name>
        <sequence type="described" ref="VSP_008300"/>
    </isoform>
    <isoform>
        <id>Q8INK9-4</id>
        <name evidence="11">C</name>
        <sequence type="described" ref="VSP_008301"/>
    </isoform>
    <isoform>
        <id>Q8INK9-6</id>
        <name>G</name>
        <sequence type="described" ref="VSP_008300 VSP_035868"/>
    </isoform>
    <isoform>
        <id>Q8INK9-7</id>
        <name>H</name>
        <sequence type="described" ref="VSP_008300 VSP_035869"/>
    </isoform>
</comment>
<comment type="tissue specificity">
    <text evidence="8">Present in the embryonic nervous system (brain and cord) in neuronal cell bodies, along axons. Also present in embryonic muscles in motor axons. Localizes to growing bristle tips where it is distributed in small puntae. Present at and at sites of actin localization.</text>
</comment>
<comment type="mass spectrometry" mass="19439.6" method="Electrospray" evidence="6">
    <molecule>Isoform A</molecule>
    <text>The measured range is 1-155.</text>
</comment>
<comment type="similarity">
    <text evidence="13">Belongs to the MsrB Met sulfoxide reductase family.</text>
</comment>
<dbReference type="EC" id="1.8.4.12" evidence="5 8"/>
<dbReference type="EMBL" id="AF486578">
    <property type="protein sequence ID" value="AAM10931.1"/>
    <property type="molecule type" value="mRNA"/>
</dbReference>
<dbReference type="EMBL" id="AE014297">
    <property type="protein sequence ID" value="AAF54569.1"/>
    <property type="molecule type" value="Genomic_DNA"/>
</dbReference>
<dbReference type="EMBL" id="AE014297">
    <property type="protein sequence ID" value="AAN13490.1"/>
    <property type="molecule type" value="Genomic_DNA"/>
</dbReference>
<dbReference type="EMBL" id="AE014297">
    <property type="protein sequence ID" value="AAN13491.1"/>
    <property type="molecule type" value="Genomic_DNA"/>
</dbReference>
<dbReference type="EMBL" id="AE014297">
    <property type="protein sequence ID" value="AAN13492.1"/>
    <property type="molecule type" value="Genomic_DNA"/>
</dbReference>
<dbReference type="EMBL" id="AE014297">
    <property type="protein sequence ID" value="AAN13493.2"/>
    <property type="molecule type" value="Genomic_DNA"/>
</dbReference>
<dbReference type="EMBL" id="AE014297">
    <property type="protein sequence ID" value="AAS65138.1"/>
    <property type="molecule type" value="Genomic_DNA"/>
</dbReference>
<dbReference type="EMBL" id="AE014297">
    <property type="protein sequence ID" value="ACL83495.1"/>
    <property type="molecule type" value="Genomic_DNA"/>
</dbReference>
<dbReference type="EMBL" id="AY070627">
    <property type="protein sequence ID" value="AAL48098.1"/>
    <property type="molecule type" value="mRNA"/>
</dbReference>
<dbReference type="EMBL" id="BT001621">
    <property type="protein sequence ID" value="AAN71376.1"/>
    <property type="molecule type" value="mRNA"/>
</dbReference>
<dbReference type="EMBL" id="BT001854">
    <property type="protein sequence ID" value="AAN71615.1"/>
    <property type="molecule type" value="mRNA"/>
</dbReference>
<dbReference type="EMBL" id="BT011487">
    <property type="protein sequence ID" value="AAR99145.1"/>
    <property type="molecule type" value="mRNA"/>
</dbReference>
<dbReference type="RefSeq" id="NP_001138036.1">
    <molecule id="Q8INK9-6"/>
    <property type="nucleotide sequence ID" value="NM_001144564.3"/>
</dbReference>
<dbReference type="RefSeq" id="NP_650030.1">
    <molecule id="Q8INK9-2"/>
    <property type="nucleotide sequence ID" value="NM_141773.4"/>
</dbReference>
<dbReference type="RefSeq" id="NP_731522.1">
    <molecule id="Q8INK9-4"/>
    <property type="nucleotide sequence ID" value="NM_169368.3"/>
</dbReference>
<dbReference type="RefSeq" id="NP_731523.1">
    <molecule id="Q8INK9-1"/>
    <property type="nucleotide sequence ID" value="NM_169369.3"/>
</dbReference>
<dbReference type="RefSeq" id="NP_731524.1">
    <molecule id="Q8INK9-3"/>
    <property type="nucleotide sequence ID" value="NM_169370.4"/>
</dbReference>
<dbReference type="RefSeq" id="NP_731525.2">
    <molecule id="Q8INK9-7"/>
    <property type="nucleotide sequence ID" value="NM_169371.4"/>
</dbReference>
<dbReference type="RefSeq" id="NP_996195.1">
    <molecule id="Q8INK9-2"/>
    <property type="nucleotide sequence ID" value="NM_206473.4"/>
</dbReference>
<dbReference type="SMR" id="Q8INK9"/>
<dbReference type="BioGRID" id="66453">
    <property type="interactions" value="4"/>
</dbReference>
<dbReference type="DIP" id="DIP-61754N"/>
<dbReference type="FunCoup" id="Q8INK9">
    <property type="interactions" value="657"/>
</dbReference>
<dbReference type="IntAct" id="Q8INK9">
    <property type="interactions" value="18"/>
</dbReference>
<dbReference type="STRING" id="7227.FBpp0081772"/>
<dbReference type="PaxDb" id="7227-FBpp0081772"/>
<dbReference type="DNASU" id="41309"/>
<dbReference type="EnsemblMetazoa" id="FBtr0082291">
    <molecule id="Q8INK9-3"/>
    <property type="protein sequence ID" value="FBpp0081768"/>
    <property type="gene ID" value="FBgn0267376"/>
</dbReference>
<dbReference type="EnsemblMetazoa" id="FBtr0082292">
    <molecule id="Q8INK9-2"/>
    <property type="protein sequence ID" value="FBpp0081769"/>
    <property type="gene ID" value="FBgn0267376"/>
</dbReference>
<dbReference type="EnsemblMetazoa" id="FBtr0082294">
    <molecule id="Q8INK9-4"/>
    <property type="protein sequence ID" value="FBpp0081771"/>
    <property type="gene ID" value="FBgn0267376"/>
</dbReference>
<dbReference type="EnsemblMetazoa" id="FBtr0082295">
    <molecule id="Q8INK9-1"/>
    <property type="protein sequence ID" value="FBpp0081772"/>
    <property type="gene ID" value="FBgn0267376"/>
</dbReference>
<dbReference type="EnsemblMetazoa" id="FBtr0273345">
    <molecule id="Q8INK9-6"/>
    <property type="protein sequence ID" value="FBpp0271853"/>
    <property type="gene ID" value="FBgn0267376"/>
</dbReference>
<dbReference type="EnsemblMetazoa" id="FBtr0273346">
    <molecule id="Q8INK9-7"/>
    <property type="protein sequence ID" value="FBpp0271854"/>
    <property type="gene ID" value="FBgn0267376"/>
</dbReference>
<dbReference type="EnsemblMetazoa" id="FBtr0273347">
    <molecule id="Q8INK9-2"/>
    <property type="protein sequence ID" value="FBpp0271855"/>
    <property type="gene ID" value="FBgn0267376"/>
</dbReference>
<dbReference type="GeneID" id="41309"/>
<dbReference type="KEGG" id="dme:Dmel_CG6584"/>
<dbReference type="AGR" id="FB:FBgn0267376"/>
<dbReference type="CTD" id="41309"/>
<dbReference type="FlyBase" id="FBgn0267376">
    <property type="gene designation" value="SelR"/>
</dbReference>
<dbReference type="VEuPathDB" id="VectorBase:FBgn0267376"/>
<dbReference type="eggNOG" id="KOG0856">
    <property type="taxonomic scope" value="Eukaryota"/>
</dbReference>
<dbReference type="GeneTree" id="ENSGT00940000155240"/>
<dbReference type="InParanoid" id="Q8INK9"/>
<dbReference type="OMA" id="LAIPRFF"/>
<dbReference type="OrthoDB" id="44061at2759"/>
<dbReference type="PhylomeDB" id="Q8INK9"/>
<dbReference type="BRENDA" id="1.8.4.12">
    <property type="organism ID" value="1994"/>
</dbReference>
<dbReference type="Reactome" id="R-DME-5676934">
    <property type="pathway name" value="Protein repair"/>
</dbReference>
<dbReference type="BioGRID-ORCS" id="41309">
    <property type="hits" value="0 hits in 3 CRISPR screens"/>
</dbReference>
<dbReference type="GenomeRNAi" id="41309"/>
<dbReference type="PRO" id="PR:Q8INK9"/>
<dbReference type="Proteomes" id="UP000000803">
    <property type="component" value="Chromosome 3R"/>
</dbReference>
<dbReference type="Bgee" id="FBgn0267376">
    <property type="expression patterns" value="Expressed in adult Malpighian tubule principal cell of lower segment in Malpighian tubule and 284 other cell types or tissues"/>
</dbReference>
<dbReference type="ExpressionAtlas" id="Q8INK9">
    <property type="expression patterns" value="baseline and differential"/>
</dbReference>
<dbReference type="GO" id="GO:0005737">
    <property type="term" value="C:cytoplasm"/>
    <property type="evidence" value="ECO:0000318"/>
    <property type="project" value="GO_Central"/>
</dbReference>
<dbReference type="GO" id="GO:0005856">
    <property type="term" value="C:cytoskeleton"/>
    <property type="evidence" value="ECO:0007669"/>
    <property type="project" value="UniProtKB-SubCell"/>
</dbReference>
<dbReference type="GO" id="GO:0005829">
    <property type="term" value="C:cytosol"/>
    <property type="evidence" value="ECO:0007005"/>
    <property type="project" value="FlyBase"/>
</dbReference>
<dbReference type="GO" id="GO:0005783">
    <property type="term" value="C:endoplasmic reticulum"/>
    <property type="evidence" value="ECO:0000250"/>
    <property type="project" value="FlyBase"/>
</dbReference>
<dbReference type="GO" id="GO:0005739">
    <property type="term" value="C:mitochondrion"/>
    <property type="evidence" value="ECO:0000250"/>
    <property type="project" value="FlyBase"/>
</dbReference>
<dbReference type="GO" id="GO:0005654">
    <property type="term" value="C:nucleoplasm"/>
    <property type="evidence" value="ECO:0007005"/>
    <property type="project" value="FlyBase"/>
</dbReference>
<dbReference type="GO" id="GO:0033743">
    <property type="term" value="F:peptide-methionine (R)-S-oxide reductase activity"/>
    <property type="evidence" value="ECO:0000314"/>
    <property type="project" value="UniProtKB"/>
</dbReference>
<dbReference type="GO" id="GO:0008270">
    <property type="term" value="F:zinc ion binding"/>
    <property type="evidence" value="ECO:0000314"/>
    <property type="project" value="FlyBase"/>
</dbReference>
<dbReference type="GO" id="GO:0007015">
    <property type="term" value="P:actin filament organization"/>
    <property type="evidence" value="ECO:0000315"/>
    <property type="project" value="FlyBase"/>
</dbReference>
<dbReference type="GO" id="GO:0030041">
    <property type="term" value="P:actin filament polymerization"/>
    <property type="evidence" value="ECO:0000316"/>
    <property type="project" value="FlyBase"/>
</dbReference>
<dbReference type="GO" id="GO:0007411">
    <property type="term" value="P:axon guidance"/>
    <property type="evidence" value="ECO:0000315"/>
    <property type="project" value="FlyBase"/>
</dbReference>
<dbReference type="GO" id="GO:0008407">
    <property type="term" value="P:chaeta morphogenesis"/>
    <property type="evidence" value="ECO:0000315"/>
    <property type="project" value="FlyBase"/>
</dbReference>
<dbReference type="GO" id="GO:0030091">
    <property type="term" value="P:protein repair"/>
    <property type="evidence" value="ECO:0000250"/>
    <property type="project" value="FlyBase"/>
</dbReference>
<dbReference type="GO" id="GO:0006979">
    <property type="term" value="P:response to oxidative stress"/>
    <property type="evidence" value="ECO:0007669"/>
    <property type="project" value="InterPro"/>
</dbReference>
<dbReference type="FunFam" id="2.170.150.20:FF:000004">
    <property type="entry name" value="Peptide-methionine (R)-S-oxide reductase"/>
    <property type="match status" value="1"/>
</dbReference>
<dbReference type="Gene3D" id="2.170.150.20">
    <property type="entry name" value="Peptide methionine sulfoxide reductase"/>
    <property type="match status" value="1"/>
</dbReference>
<dbReference type="InterPro" id="IPR028427">
    <property type="entry name" value="Met_Sox_Rdtase_MsrB"/>
</dbReference>
<dbReference type="InterPro" id="IPR002579">
    <property type="entry name" value="Met_Sox_Rdtase_MsrB_dom"/>
</dbReference>
<dbReference type="InterPro" id="IPR011057">
    <property type="entry name" value="Mss4-like_sf"/>
</dbReference>
<dbReference type="NCBIfam" id="TIGR00357">
    <property type="entry name" value="peptide-methionine (R)-S-oxide reductase MsrB"/>
    <property type="match status" value="1"/>
</dbReference>
<dbReference type="PANTHER" id="PTHR10173">
    <property type="entry name" value="METHIONINE SULFOXIDE REDUCTASE"/>
    <property type="match status" value="1"/>
</dbReference>
<dbReference type="PANTHER" id="PTHR10173:SF52">
    <property type="entry name" value="METHIONINE-R-SULFOXIDE REDUCTASE B1"/>
    <property type="match status" value="1"/>
</dbReference>
<dbReference type="Pfam" id="PF01641">
    <property type="entry name" value="SelR"/>
    <property type="match status" value="1"/>
</dbReference>
<dbReference type="SUPFAM" id="SSF51316">
    <property type="entry name" value="Mss4-like"/>
    <property type="match status" value="1"/>
</dbReference>
<dbReference type="PROSITE" id="PS51790">
    <property type="entry name" value="MSRB"/>
    <property type="match status" value="1"/>
</dbReference>
<evidence type="ECO:0000250" key="1">
    <source>
        <dbReference type="UniProtKB" id="Q9JLC3"/>
    </source>
</evidence>
<evidence type="ECO:0000255" key="2">
    <source>
        <dbReference type="PROSITE-ProRule" id="PRU01126"/>
    </source>
</evidence>
<evidence type="ECO:0000256" key="3">
    <source>
        <dbReference type="SAM" id="MobiDB-lite"/>
    </source>
</evidence>
<evidence type="ECO:0000269" key="4">
    <source>
    </source>
</evidence>
<evidence type="ECO:0000269" key="5">
    <source>
    </source>
</evidence>
<evidence type="ECO:0000269" key="6">
    <source>
    </source>
</evidence>
<evidence type="ECO:0000269" key="7">
    <source>
    </source>
</evidence>
<evidence type="ECO:0000269" key="8">
    <source>
    </source>
</evidence>
<evidence type="ECO:0000303" key="9">
    <source>
    </source>
</evidence>
<evidence type="ECO:0000303" key="10">
    <source>
    </source>
</evidence>
<evidence type="ECO:0000303" key="11">
    <source>
    </source>
</evidence>
<evidence type="ECO:0000303" key="12">
    <source ref="5"/>
</evidence>
<evidence type="ECO:0000305" key="13"/>
<evidence type="ECO:0000312" key="14">
    <source>
        <dbReference type="EMBL" id="AAN13491.1"/>
    </source>
</evidence>
<accession>Q8INK9</accession>
<accession>A4V2P1</accession>
<accession>B7Z0V7</accession>
<accession>Q53XF3</accession>
<accession>Q8IGC0</accession>
<accession>Q8IGS8</accession>
<accession>Q8INK8</accession>
<accession>Q8INL0</accession>
<accession>Q8STJ0</accession>
<accession>Q9VGV4</accession>
<organism evidence="14">
    <name type="scientific">Drosophila melanogaster</name>
    <name type="common">Fruit fly</name>
    <dbReference type="NCBI Taxonomy" id="7227"/>
    <lineage>
        <taxon>Eukaryota</taxon>
        <taxon>Metazoa</taxon>
        <taxon>Ecdysozoa</taxon>
        <taxon>Arthropoda</taxon>
        <taxon>Hexapoda</taxon>
        <taxon>Insecta</taxon>
        <taxon>Pterygota</taxon>
        <taxon>Neoptera</taxon>
        <taxon>Endopterygota</taxon>
        <taxon>Diptera</taxon>
        <taxon>Brachycera</taxon>
        <taxon>Muscomorpha</taxon>
        <taxon>Ephydroidea</taxon>
        <taxon>Drosophilidae</taxon>
        <taxon>Drosophila</taxon>
        <taxon>Sophophora</taxon>
    </lineage>
</organism>
<proteinExistence type="evidence at protein level"/>
<name>MSRB_DROME</name>
<protein>
    <recommendedName>
        <fullName>Methionine-R-sulfoxide reductase B1</fullName>
        <ecNumber evidence="5 8">1.8.4.12</ecNumber>
    </recommendedName>
    <alternativeName>
        <fullName>Selenoprotein R</fullName>
    </alternativeName>
</protein>
<sequence length="208" mass="23299">MFALSARHALRRTRIFAIPRFFADSRQDSDNPDKRYSGPAATMDNKSEKVTVNKEELRKRLTPVQYQVTQEAGTERPFTGCYNKHYEKGVYQCIVCHQDLFSSETKYDSGCGWPAFNDVLDKGKVTLHRDASIPGGNILLLIAHPERIRTEVRCARCNAHMGHVFEDGPKPTRKRYCINSASIEFVNADPATSSPPVATPTAAPIAQQ</sequence>
<reference key="1">
    <citation type="journal article" date="2002" name="Proc. Natl. Acad. Sci. U.S.A.">
        <title>Selenoprotein R is a zinc-containing stereo-specific methionine sulfoxide reductase.</title>
        <authorList>
            <person name="Kryukov G.V."/>
            <person name="Kumar R.A."/>
            <person name="Koc A."/>
            <person name="Sun Z."/>
            <person name="Gladyshev V.N."/>
        </authorList>
    </citation>
    <scope>NUCLEOTIDE SEQUENCE [MRNA] (ISOFORM A)</scope>
    <scope>ENZYME ACTIVITY</scope>
    <scope>ACTIVE SITE</scope>
    <scope>ZINC-BINDING</scope>
</reference>
<reference key="2">
    <citation type="journal article" date="2000" name="Science">
        <title>The genome sequence of Drosophila melanogaster.</title>
        <authorList>
            <person name="Adams M.D."/>
            <person name="Celniker S.E."/>
            <person name="Holt R.A."/>
            <person name="Evans C.A."/>
            <person name="Gocayne J.D."/>
            <person name="Amanatides P.G."/>
            <person name="Scherer S.E."/>
            <person name="Li P.W."/>
            <person name="Hoskins R.A."/>
            <person name="Galle R.F."/>
            <person name="George R.A."/>
            <person name="Lewis S.E."/>
            <person name="Richards S."/>
            <person name="Ashburner M."/>
            <person name="Henderson S.N."/>
            <person name="Sutton G.G."/>
            <person name="Wortman J.R."/>
            <person name="Yandell M.D."/>
            <person name="Zhang Q."/>
            <person name="Chen L.X."/>
            <person name="Brandon R.C."/>
            <person name="Rogers Y.-H.C."/>
            <person name="Blazej R.G."/>
            <person name="Champe M."/>
            <person name="Pfeiffer B.D."/>
            <person name="Wan K.H."/>
            <person name="Doyle C."/>
            <person name="Baxter E.G."/>
            <person name="Helt G."/>
            <person name="Nelson C.R."/>
            <person name="Miklos G.L.G."/>
            <person name="Abril J.F."/>
            <person name="Agbayani A."/>
            <person name="An H.-J."/>
            <person name="Andrews-Pfannkoch C."/>
            <person name="Baldwin D."/>
            <person name="Ballew R.M."/>
            <person name="Basu A."/>
            <person name="Baxendale J."/>
            <person name="Bayraktaroglu L."/>
            <person name="Beasley E.M."/>
            <person name="Beeson K.Y."/>
            <person name="Benos P.V."/>
            <person name="Berman B.P."/>
            <person name="Bhandari D."/>
            <person name="Bolshakov S."/>
            <person name="Borkova D."/>
            <person name="Botchan M.R."/>
            <person name="Bouck J."/>
            <person name="Brokstein P."/>
            <person name="Brottier P."/>
            <person name="Burtis K.C."/>
            <person name="Busam D.A."/>
            <person name="Butler H."/>
            <person name="Cadieu E."/>
            <person name="Center A."/>
            <person name="Chandra I."/>
            <person name="Cherry J.M."/>
            <person name="Cawley S."/>
            <person name="Dahlke C."/>
            <person name="Davenport L.B."/>
            <person name="Davies P."/>
            <person name="de Pablos B."/>
            <person name="Delcher A."/>
            <person name="Deng Z."/>
            <person name="Mays A.D."/>
            <person name="Dew I."/>
            <person name="Dietz S.M."/>
            <person name="Dodson K."/>
            <person name="Doup L.E."/>
            <person name="Downes M."/>
            <person name="Dugan-Rocha S."/>
            <person name="Dunkov B.C."/>
            <person name="Dunn P."/>
            <person name="Durbin K.J."/>
            <person name="Evangelista C.C."/>
            <person name="Ferraz C."/>
            <person name="Ferriera S."/>
            <person name="Fleischmann W."/>
            <person name="Fosler C."/>
            <person name="Gabrielian A.E."/>
            <person name="Garg N.S."/>
            <person name="Gelbart W.M."/>
            <person name="Glasser K."/>
            <person name="Glodek A."/>
            <person name="Gong F."/>
            <person name="Gorrell J.H."/>
            <person name="Gu Z."/>
            <person name="Guan P."/>
            <person name="Harris M."/>
            <person name="Harris N.L."/>
            <person name="Harvey D.A."/>
            <person name="Heiman T.J."/>
            <person name="Hernandez J.R."/>
            <person name="Houck J."/>
            <person name="Hostin D."/>
            <person name="Houston K.A."/>
            <person name="Howland T.J."/>
            <person name="Wei M.-H."/>
            <person name="Ibegwam C."/>
            <person name="Jalali M."/>
            <person name="Kalush F."/>
            <person name="Karpen G.H."/>
            <person name="Ke Z."/>
            <person name="Kennison J.A."/>
            <person name="Ketchum K.A."/>
            <person name="Kimmel B.E."/>
            <person name="Kodira C.D."/>
            <person name="Kraft C.L."/>
            <person name="Kravitz S."/>
            <person name="Kulp D."/>
            <person name="Lai Z."/>
            <person name="Lasko P."/>
            <person name="Lei Y."/>
            <person name="Levitsky A.A."/>
            <person name="Li J.H."/>
            <person name="Li Z."/>
            <person name="Liang Y."/>
            <person name="Lin X."/>
            <person name="Liu X."/>
            <person name="Mattei B."/>
            <person name="McIntosh T.C."/>
            <person name="McLeod M.P."/>
            <person name="McPherson D."/>
            <person name="Merkulov G."/>
            <person name="Milshina N.V."/>
            <person name="Mobarry C."/>
            <person name="Morris J."/>
            <person name="Moshrefi A."/>
            <person name="Mount S.M."/>
            <person name="Moy M."/>
            <person name="Murphy B."/>
            <person name="Murphy L."/>
            <person name="Muzny D.M."/>
            <person name="Nelson D.L."/>
            <person name="Nelson D.R."/>
            <person name="Nelson K.A."/>
            <person name="Nixon K."/>
            <person name="Nusskern D.R."/>
            <person name="Pacleb J.M."/>
            <person name="Palazzolo M."/>
            <person name="Pittman G.S."/>
            <person name="Pan S."/>
            <person name="Pollard J."/>
            <person name="Puri V."/>
            <person name="Reese M.G."/>
            <person name="Reinert K."/>
            <person name="Remington K."/>
            <person name="Saunders R.D.C."/>
            <person name="Scheeler F."/>
            <person name="Shen H."/>
            <person name="Shue B.C."/>
            <person name="Siden-Kiamos I."/>
            <person name="Simpson M."/>
            <person name="Skupski M.P."/>
            <person name="Smith T.J."/>
            <person name="Spier E."/>
            <person name="Spradling A.C."/>
            <person name="Stapleton M."/>
            <person name="Strong R."/>
            <person name="Sun E."/>
            <person name="Svirskas R."/>
            <person name="Tector C."/>
            <person name="Turner R."/>
            <person name="Venter E."/>
            <person name="Wang A.H."/>
            <person name="Wang X."/>
            <person name="Wang Z.-Y."/>
            <person name="Wassarman D.A."/>
            <person name="Weinstock G.M."/>
            <person name="Weissenbach J."/>
            <person name="Williams S.M."/>
            <person name="Woodage T."/>
            <person name="Worley K.C."/>
            <person name="Wu D."/>
            <person name="Yang S."/>
            <person name="Yao Q.A."/>
            <person name="Ye J."/>
            <person name="Yeh R.-F."/>
            <person name="Zaveri J.S."/>
            <person name="Zhan M."/>
            <person name="Zhang G."/>
            <person name="Zhao Q."/>
            <person name="Zheng L."/>
            <person name="Zheng X.H."/>
            <person name="Zhong F.N."/>
            <person name="Zhong W."/>
            <person name="Zhou X."/>
            <person name="Zhu S.C."/>
            <person name="Zhu X."/>
            <person name="Smith H.O."/>
            <person name="Gibbs R.A."/>
            <person name="Myers E.W."/>
            <person name="Rubin G.M."/>
            <person name="Venter J.C."/>
        </authorList>
    </citation>
    <scope>NUCLEOTIDE SEQUENCE [LARGE SCALE GENOMIC DNA]</scope>
    <source>
        <strain evidence="4">Berkeley</strain>
    </source>
</reference>
<reference key="3">
    <citation type="journal article" date="2002" name="Genome Biol.">
        <title>Annotation of the Drosophila melanogaster euchromatic genome: a systematic review.</title>
        <authorList>
            <person name="Misra S."/>
            <person name="Crosby M.A."/>
            <person name="Mungall C.J."/>
            <person name="Matthews B.B."/>
            <person name="Campbell K.S."/>
            <person name="Hradecky P."/>
            <person name="Huang Y."/>
            <person name="Kaminker J.S."/>
            <person name="Millburn G.H."/>
            <person name="Prochnik S.E."/>
            <person name="Smith C.D."/>
            <person name="Tupy J.L."/>
            <person name="Whitfield E.J."/>
            <person name="Bayraktaroglu L."/>
            <person name="Berman B.P."/>
            <person name="Bettencourt B.R."/>
            <person name="Celniker S.E."/>
            <person name="de Grey A.D.N.J."/>
            <person name="Drysdale R.A."/>
            <person name="Harris N.L."/>
            <person name="Richter J."/>
            <person name="Russo S."/>
            <person name="Schroeder A.J."/>
            <person name="Shu S.Q."/>
            <person name="Stapleton M."/>
            <person name="Yamada C."/>
            <person name="Ashburner M."/>
            <person name="Gelbart W.M."/>
            <person name="Rubin G.M."/>
            <person name="Lewis S.E."/>
        </authorList>
    </citation>
    <scope>GENOME REANNOTATION</scope>
    <scope>ALTERNATIVE SPLICING</scope>
    <source>
        <strain>Berkeley</strain>
    </source>
</reference>
<reference key="4">
    <citation type="journal article" date="2002" name="Genome Biol.">
        <title>A Drosophila full-length cDNA resource.</title>
        <authorList>
            <person name="Stapleton M."/>
            <person name="Carlson J.W."/>
            <person name="Brokstein P."/>
            <person name="Yu C."/>
            <person name="Champe M."/>
            <person name="George R.A."/>
            <person name="Guarin H."/>
            <person name="Kronmiller B."/>
            <person name="Pacleb J.M."/>
            <person name="Park S."/>
            <person name="Wan K.H."/>
            <person name="Rubin G.M."/>
            <person name="Celniker S.E."/>
        </authorList>
    </citation>
    <scope>NUCLEOTIDE SEQUENCE [LARGE SCALE MRNA] (ISOFORMS A; G AND H)</scope>
    <source>
        <strain evidence="7">Berkeley</strain>
        <tissue evidence="7">Embryo</tissue>
        <tissue>Head</tissue>
    </source>
</reference>
<reference key="5">
    <citation type="submission" date="2004-01" db="EMBL/GenBank/DDBJ databases">
        <authorList>
            <person name="Stapleton M."/>
            <person name="Carlson J.W."/>
            <person name="Chavez C."/>
            <person name="Frise E."/>
            <person name="George R.A."/>
            <person name="Pacleb J.M."/>
            <person name="Park S."/>
            <person name="Wan K.H."/>
            <person name="Yu C."/>
            <person name="Rubin G.M."/>
            <person name="Celniker S.E."/>
        </authorList>
    </citation>
    <scope>NUCLEOTIDE SEQUENCE [LARGE SCALE MRNA] (ISOFORM B)</scope>
    <source>
        <strain>Berkeley</strain>
        <tissue>Embryo</tissue>
    </source>
</reference>
<reference key="6">
    <citation type="journal article" date="2002" name="J. Biol. Chem.">
        <title>Reaction mechanism, evolutionary analysis, and role of zinc in Drosophila methionine-R-sulfoxide reductase.</title>
        <authorList>
            <person name="Kumar R.A."/>
            <person name="Koc A."/>
            <person name="Cerny R.L."/>
            <person name="Gladyshev V.N."/>
        </authorList>
    </citation>
    <scope>ZINC-BINDING</scope>
    <scope>DISULFIDE BOND</scope>
    <scope>MASS SPECTROMETRY</scope>
    <scope>MUTAGENESIS OF CYS-93; CYS-96; CYS-111; CYS-154; CYS-157; HIS-160; HIS-163; CYS-177 AND SER-180</scope>
</reference>
<reference key="7">
    <citation type="journal article" date="2013" name="Nat. Cell Biol.">
        <title>SelR reverses Mical-mediated oxidation of actin to regulate F-actin dynamics.</title>
        <authorList>
            <person name="Hung R.J."/>
            <person name="Spaeth C.S."/>
            <person name="Yesilyurt H.G."/>
            <person name="Terman J.R."/>
        </authorList>
    </citation>
    <scope>FUNCTION</scope>
    <scope>CATALYTIC ACTIVITY</scope>
    <scope>TISSUE SPECIFICITY</scope>
</reference>
<feature type="initiator methionine" description="Removed">
    <location>
        <position position="1"/>
    </location>
</feature>
<feature type="chain" id="PRO_0000140323" description="Methionine-R-sulfoxide reductase B1">
    <location>
        <begin position="2"/>
        <end position="208"/>
    </location>
</feature>
<feature type="domain" description="MsrB" evidence="2">
    <location>
        <begin position="54"/>
        <end position="188"/>
    </location>
</feature>
<feature type="region of interest" description="Disordered" evidence="3">
    <location>
        <begin position="27"/>
        <end position="48"/>
    </location>
</feature>
<feature type="region of interest" description="Disordered" evidence="3">
    <location>
        <begin position="189"/>
        <end position="208"/>
    </location>
</feature>
<feature type="compositionally biased region" description="Basic and acidic residues" evidence="3">
    <location>
        <begin position="27"/>
        <end position="36"/>
    </location>
</feature>
<feature type="active site" description="Nucleophile" evidence="2 5">
    <location>
        <position position="177"/>
    </location>
</feature>
<feature type="binding site" evidence="2 5">
    <location>
        <position position="93"/>
    </location>
    <ligand>
        <name>Zn(2+)</name>
        <dbReference type="ChEBI" id="CHEBI:29105"/>
    </ligand>
</feature>
<feature type="binding site" evidence="2 5">
    <location>
        <position position="96"/>
    </location>
    <ligand>
        <name>Zn(2+)</name>
        <dbReference type="ChEBI" id="CHEBI:29105"/>
    </ligand>
</feature>
<feature type="binding site" evidence="2 5">
    <location>
        <position position="154"/>
    </location>
    <ligand>
        <name>Zn(2+)</name>
        <dbReference type="ChEBI" id="CHEBI:29105"/>
    </ligand>
</feature>
<feature type="binding site" evidence="2 5">
    <location>
        <position position="157"/>
    </location>
    <ligand>
        <name>Zn(2+)</name>
        <dbReference type="ChEBI" id="CHEBI:29105"/>
    </ligand>
</feature>
<feature type="disulfide bond" evidence="6">
    <location>
        <begin position="111"/>
        <end position="177"/>
    </location>
</feature>
<feature type="splice variant" id="VSP_008300" description="In isoform A, isoform B, isoform G and isoform H." evidence="9 10 12">
    <location>
        <begin position="1"/>
        <end position="42"/>
    </location>
</feature>
<feature type="splice variant" id="VSP_008301" description="In isoform A and isoform C." evidence="9 10">
    <location>
        <begin position="134"/>
        <end position="144"/>
    </location>
</feature>
<feature type="splice variant" id="VSP_035868" description="In isoform G." evidence="10">
    <original>GGNILLLIAHPERIRTEVRCARCNAHMGHVFEDGPKPTRKRYCINSASIEFVNADPATSSPPVATPTAAPIAQQ</original>
    <variation>VVISKTLGMVRTEVRCSRCSAHMGHVFDDGPPPKHRRFCINSASIDFVKSATPSKADPSTASSKK</variation>
    <location>
        <begin position="135"/>
        <end position="208"/>
    </location>
</feature>
<feature type="splice variant" id="VSP_035869" description="In isoform H." evidence="10">
    <original>GNILLLIAHPERIRTEVRCARCNAHMGHVFEDGPKPTRKRYCINSASIEFVNADPATSSPPVATPTAAPIAQQ</original>
    <variation>MVRTEVRCSRCSAHMGHVFDDGPPPKHRRFCINSASIDFVKSATPSKADPSTASSKK</variation>
    <location>
        <begin position="136"/>
        <end position="208"/>
    </location>
</feature>
<feature type="mutagenesis site" description="Loss of activity and zinc binding." evidence="6">
    <original>C</original>
    <variation>G</variation>
    <location>
        <position position="93"/>
    </location>
</feature>
<feature type="mutagenesis site" description="Loss of activity and zinc binding." evidence="6">
    <original>C</original>
    <variation>G</variation>
    <variation>S</variation>
    <location>
        <position position="96"/>
    </location>
</feature>
<feature type="mutagenesis site" description="Thioredoxin-dependent activity reduced, but no change in DTT-dependent activity." evidence="6">
    <original>C</original>
    <variation>S</variation>
    <location>
        <position position="111"/>
    </location>
</feature>
<feature type="mutagenesis site" description="Loss of activity and zinc binding." evidence="6">
    <original>C</original>
    <variation>G</variation>
    <variation>S</variation>
    <location>
        <position position="154"/>
    </location>
</feature>
<feature type="mutagenesis site" description="Loss of activity and zinc binding." evidence="6">
    <original>C</original>
    <variation>S</variation>
    <location>
        <position position="157"/>
    </location>
</feature>
<feature type="mutagenesis site" description="Loss of thioredoxin-dependent activity, 81% DTT-dependent activity." evidence="6">
    <original>H</original>
    <variation>G</variation>
    <location>
        <position position="160"/>
    </location>
</feature>
<feature type="mutagenesis site" description="Loss of thioredoxin-dependent activity, 80% DTT-dependent activity." evidence="6">
    <original>H</original>
    <variation>G</variation>
    <location>
        <position position="163"/>
    </location>
</feature>
<feature type="mutagenesis site" description="Loss of activity." evidence="6">
    <original>C</original>
    <variation>K</variation>
    <variation>S</variation>
    <location>
        <position position="177"/>
    </location>
</feature>
<feature type="mutagenesis site" description="Loss of thioredoxin-dependent activity, 85% DTT-dependent activity." evidence="6">
    <original>S</original>
    <variation>G</variation>
    <location>
        <position position="180"/>
    </location>
</feature>
<keyword id="KW-0025">Alternative splicing</keyword>
<keyword id="KW-0963">Cytoplasm</keyword>
<keyword id="KW-0206">Cytoskeleton</keyword>
<keyword id="KW-1015">Disulfide bond</keyword>
<keyword id="KW-0479">Metal-binding</keyword>
<keyword id="KW-0539">Nucleus</keyword>
<keyword id="KW-0560">Oxidoreductase</keyword>
<keyword id="KW-1185">Reference proteome</keyword>
<keyword id="KW-0862">Zinc</keyword>
<gene>
    <name type="primary">SelR</name>
    <name type="synonym">MsrB</name>
    <name type="synonym">MsrB1</name>
    <name type="ORF">CG6584</name>
</gene>